<organism>
    <name type="scientific">Mus spretus</name>
    <name type="common">Western Mediterranean mouse</name>
    <name type="synonym">Algerian mouse</name>
    <dbReference type="NCBI Taxonomy" id="10096"/>
    <lineage>
        <taxon>Eukaryota</taxon>
        <taxon>Metazoa</taxon>
        <taxon>Chordata</taxon>
        <taxon>Craniata</taxon>
        <taxon>Vertebrata</taxon>
        <taxon>Euteleostomi</taxon>
        <taxon>Mammalia</taxon>
        <taxon>Eutheria</taxon>
        <taxon>Euarchontoglires</taxon>
        <taxon>Glires</taxon>
        <taxon>Rodentia</taxon>
        <taxon>Myomorpha</taxon>
        <taxon>Muroidea</taxon>
        <taxon>Muridae</taxon>
        <taxon>Murinae</taxon>
        <taxon>Mus</taxon>
        <taxon>Mus</taxon>
    </lineage>
</organism>
<feature type="chain" id="PRO_0000056230" description="E3 ubiquitin-protein ligase Midline-1">
    <location>
        <begin position="1"/>
        <end position="667"/>
    </location>
</feature>
<feature type="domain" description="COS" evidence="8">
    <location>
        <begin position="320"/>
        <end position="379"/>
    </location>
</feature>
<feature type="domain" description="Fibronectin type-III" evidence="6">
    <location>
        <begin position="381"/>
        <end position="484"/>
    </location>
</feature>
<feature type="domain" description="B30.2/SPRY" evidence="7">
    <location>
        <begin position="482"/>
        <end position="659"/>
    </location>
</feature>
<feature type="zinc finger region" description="RING-type" evidence="5">
    <location>
        <begin position="10"/>
        <end position="60"/>
    </location>
</feature>
<feature type="zinc finger region" description="B box-type 1" evidence="4">
    <location>
        <begin position="116"/>
        <end position="165"/>
    </location>
</feature>
<feature type="zinc finger region" description="B box-type 2" evidence="4">
    <location>
        <begin position="172"/>
        <end position="212"/>
    </location>
</feature>
<feature type="region of interest" description="Disordered" evidence="9">
    <location>
        <begin position="471"/>
        <end position="524"/>
    </location>
</feature>
<feature type="coiled-coil region" evidence="3">
    <location>
        <begin position="205"/>
        <end position="264"/>
    </location>
</feature>
<feature type="compositionally biased region" description="Polar residues" evidence="9">
    <location>
        <begin position="471"/>
        <end position="485"/>
    </location>
</feature>
<feature type="compositionally biased region" description="Basic and acidic residues" evidence="9">
    <location>
        <begin position="499"/>
        <end position="520"/>
    </location>
</feature>
<feature type="binding site" evidence="1">
    <location>
        <position position="119"/>
    </location>
    <ligand>
        <name>Zn(2+)</name>
        <dbReference type="ChEBI" id="CHEBI:29105"/>
        <label>1</label>
    </ligand>
</feature>
<feature type="binding site" evidence="1">
    <location>
        <position position="122"/>
    </location>
    <ligand>
        <name>Zn(2+)</name>
        <dbReference type="ChEBI" id="CHEBI:29105"/>
        <label>1</label>
    </ligand>
</feature>
<feature type="binding site" evidence="1">
    <location>
        <position position="134"/>
    </location>
    <ligand>
        <name>Zn(2+)</name>
        <dbReference type="ChEBI" id="CHEBI:29105"/>
        <label>2</label>
    </ligand>
</feature>
<feature type="binding site" evidence="1">
    <location>
        <position position="137"/>
    </location>
    <ligand>
        <name>Zn(2+)</name>
        <dbReference type="ChEBI" id="CHEBI:29105"/>
        <label>2</label>
    </ligand>
</feature>
<feature type="binding site" evidence="1">
    <location>
        <position position="142"/>
    </location>
    <ligand>
        <name>Zn(2+)</name>
        <dbReference type="ChEBI" id="CHEBI:29105"/>
        <label>1</label>
    </ligand>
</feature>
<feature type="binding site" evidence="1">
    <location>
        <position position="145"/>
    </location>
    <ligand>
        <name>Zn(2+)</name>
        <dbReference type="ChEBI" id="CHEBI:29105"/>
        <label>1</label>
    </ligand>
</feature>
<feature type="binding site" evidence="1">
    <location>
        <position position="150"/>
    </location>
    <ligand>
        <name>Zn(2+)</name>
        <dbReference type="ChEBI" id="CHEBI:29105"/>
        <label>2</label>
    </ligand>
</feature>
<feature type="binding site" evidence="1">
    <location>
        <position position="159"/>
    </location>
    <ligand>
        <name>Zn(2+)</name>
        <dbReference type="ChEBI" id="CHEBI:29105"/>
        <label>2</label>
    </ligand>
</feature>
<feature type="binding site" evidence="4">
    <location>
        <position position="175"/>
    </location>
    <ligand>
        <name>Zn(2+)</name>
        <dbReference type="ChEBI" id="CHEBI:29105"/>
        <label>3</label>
    </ligand>
</feature>
<feature type="binding site" evidence="4">
    <location>
        <position position="178"/>
    </location>
    <ligand>
        <name>Zn(2+)</name>
        <dbReference type="ChEBI" id="CHEBI:29105"/>
        <label>3</label>
    </ligand>
</feature>
<feature type="binding site" evidence="4">
    <location>
        <position position="198"/>
    </location>
    <ligand>
        <name>Zn(2+)</name>
        <dbReference type="ChEBI" id="CHEBI:29105"/>
        <label>3</label>
    </ligand>
</feature>
<feature type="binding site" evidence="4">
    <location>
        <position position="204"/>
    </location>
    <ligand>
        <name>Zn(2+)</name>
        <dbReference type="ChEBI" id="CHEBI:29105"/>
        <label>3</label>
    </ligand>
</feature>
<feature type="modified residue" description="Phosphoserine" evidence="2">
    <location>
        <position position="92"/>
    </location>
</feature>
<feature type="modified residue" description="Phosphoserine" evidence="2">
    <location>
        <position position="96"/>
    </location>
</feature>
<feature type="modified residue" description="Phosphoserine" evidence="2">
    <location>
        <position position="511"/>
    </location>
</feature>
<dbReference type="EC" id="2.3.2.27"/>
<dbReference type="EMBL" id="AF186460">
    <property type="protein sequence ID" value="AAD56246.1"/>
    <property type="molecule type" value="mRNA"/>
</dbReference>
<dbReference type="BMRB" id="P82457"/>
<dbReference type="SMR" id="P82457"/>
<dbReference type="MGI" id="MGI:1100537">
    <property type="gene designation" value="Mid1"/>
</dbReference>
<dbReference type="GO" id="GO:0005737">
    <property type="term" value="C:cytoplasm"/>
    <property type="evidence" value="ECO:0007669"/>
    <property type="project" value="UniProtKB-SubCell"/>
</dbReference>
<dbReference type="GO" id="GO:0005874">
    <property type="term" value="C:microtubule"/>
    <property type="evidence" value="ECO:0007669"/>
    <property type="project" value="UniProtKB-KW"/>
</dbReference>
<dbReference type="GO" id="GO:0016740">
    <property type="term" value="F:transferase activity"/>
    <property type="evidence" value="ECO:0007669"/>
    <property type="project" value="UniProtKB-KW"/>
</dbReference>
<dbReference type="GO" id="GO:0008270">
    <property type="term" value="F:zinc ion binding"/>
    <property type="evidence" value="ECO:0007669"/>
    <property type="project" value="UniProtKB-KW"/>
</dbReference>
<dbReference type="GO" id="GO:0070507">
    <property type="term" value="P:regulation of microtubule cytoskeleton organization"/>
    <property type="evidence" value="ECO:0007669"/>
    <property type="project" value="TreeGrafter"/>
</dbReference>
<dbReference type="CDD" id="cd19836">
    <property type="entry name" value="Bbox1_MID1_C-I"/>
    <property type="match status" value="1"/>
</dbReference>
<dbReference type="CDD" id="cd19822">
    <property type="entry name" value="Bbox2_MID1_C-I"/>
    <property type="match status" value="1"/>
</dbReference>
<dbReference type="CDD" id="cd00063">
    <property type="entry name" value="FN3"/>
    <property type="match status" value="1"/>
</dbReference>
<dbReference type="CDD" id="cd12892">
    <property type="entry name" value="SPRY_PRY_TRIM18"/>
    <property type="match status" value="1"/>
</dbReference>
<dbReference type="FunFam" id="2.60.120.920:FF:000010">
    <property type="entry name" value="E3 ubiquitin-protein ligase Midline-1"/>
    <property type="match status" value="1"/>
</dbReference>
<dbReference type="FunFam" id="3.30.160.60:FF:000334">
    <property type="entry name" value="E3 ubiquitin-protein ligase Midline-1"/>
    <property type="match status" value="1"/>
</dbReference>
<dbReference type="FunFam" id="2.60.40.10:FF:000153">
    <property type="entry name" value="Probable E3 ubiquitin-protein ligase MID2"/>
    <property type="match status" value="1"/>
</dbReference>
<dbReference type="FunFam" id="3.30.40.10:FF:000014">
    <property type="entry name" value="probable E3 ubiquitin-protein ligase MID2"/>
    <property type="match status" value="1"/>
</dbReference>
<dbReference type="FunFam" id="4.10.830.40:FF:000002">
    <property type="entry name" value="probable E3 ubiquitin-protein ligase MID2"/>
    <property type="match status" value="1"/>
</dbReference>
<dbReference type="Gene3D" id="2.60.120.920">
    <property type="match status" value="1"/>
</dbReference>
<dbReference type="Gene3D" id="4.10.830.40">
    <property type="match status" value="1"/>
</dbReference>
<dbReference type="Gene3D" id="3.30.160.60">
    <property type="entry name" value="Classic Zinc Finger"/>
    <property type="match status" value="1"/>
</dbReference>
<dbReference type="Gene3D" id="2.60.40.10">
    <property type="entry name" value="Immunoglobulins"/>
    <property type="match status" value="1"/>
</dbReference>
<dbReference type="Gene3D" id="3.30.40.10">
    <property type="entry name" value="Zinc/RING finger domain, C3HC4 (zinc finger)"/>
    <property type="match status" value="1"/>
</dbReference>
<dbReference type="InterPro" id="IPR001870">
    <property type="entry name" value="B30.2/SPRY"/>
</dbReference>
<dbReference type="InterPro" id="IPR043136">
    <property type="entry name" value="B30.2/SPRY_sf"/>
</dbReference>
<dbReference type="InterPro" id="IPR003649">
    <property type="entry name" value="Bbox_C"/>
</dbReference>
<dbReference type="InterPro" id="IPR003879">
    <property type="entry name" value="Butyrophylin_SPRY"/>
</dbReference>
<dbReference type="InterPro" id="IPR013320">
    <property type="entry name" value="ConA-like_dom_sf"/>
</dbReference>
<dbReference type="InterPro" id="IPR017903">
    <property type="entry name" value="COS_domain"/>
</dbReference>
<dbReference type="InterPro" id="IPR050617">
    <property type="entry name" value="E3_ligase_FN3/SPRY"/>
</dbReference>
<dbReference type="InterPro" id="IPR003961">
    <property type="entry name" value="FN3_dom"/>
</dbReference>
<dbReference type="InterPro" id="IPR036116">
    <property type="entry name" value="FN3_sf"/>
</dbReference>
<dbReference type="InterPro" id="IPR013783">
    <property type="entry name" value="Ig-like_fold"/>
</dbReference>
<dbReference type="InterPro" id="IPR047095">
    <property type="entry name" value="MID1_Bbox1_Zfn"/>
</dbReference>
<dbReference type="InterPro" id="IPR027727">
    <property type="entry name" value="MID1_Bbox2_Zfn"/>
</dbReference>
<dbReference type="InterPro" id="IPR040859">
    <property type="entry name" value="Midline-1_COS"/>
</dbReference>
<dbReference type="InterPro" id="IPR003877">
    <property type="entry name" value="SPRY_dom"/>
</dbReference>
<dbReference type="InterPro" id="IPR027370">
    <property type="entry name" value="Znf-RING_euk"/>
</dbReference>
<dbReference type="InterPro" id="IPR000315">
    <property type="entry name" value="Znf_B-box"/>
</dbReference>
<dbReference type="InterPro" id="IPR001841">
    <property type="entry name" value="Znf_RING"/>
</dbReference>
<dbReference type="InterPro" id="IPR013083">
    <property type="entry name" value="Znf_RING/FYVE/PHD"/>
</dbReference>
<dbReference type="InterPro" id="IPR017907">
    <property type="entry name" value="Znf_RING_CS"/>
</dbReference>
<dbReference type="PANTHER" id="PTHR24099:SF23">
    <property type="entry name" value="E3 UBIQUITIN-PROTEIN LIGASE MIDLINE-1"/>
    <property type="match status" value="1"/>
</dbReference>
<dbReference type="PANTHER" id="PTHR24099">
    <property type="entry name" value="E3 UBIQUITIN-PROTEIN LIGASE TRIM36-RELATED"/>
    <property type="match status" value="1"/>
</dbReference>
<dbReference type="Pfam" id="PF22586">
    <property type="entry name" value="ANCHR-like_BBOX"/>
    <property type="match status" value="1"/>
</dbReference>
<dbReference type="Pfam" id="PF18568">
    <property type="entry name" value="COS"/>
    <property type="match status" value="1"/>
</dbReference>
<dbReference type="Pfam" id="PF00041">
    <property type="entry name" value="fn3"/>
    <property type="match status" value="1"/>
</dbReference>
<dbReference type="Pfam" id="PF00622">
    <property type="entry name" value="SPRY"/>
    <property type="match status" value="1"/>
</dbReference>
<dbReference type="Pfam" id="PF00643">
    <property type="entry name" value="zf-B_box"/>
    <property type="match status" value="1"/>
</dbReference>
<dbReference type="Pfam" id="PF13445">
    <property type="entry name" value="zf-RING_UBOX"/>
    <property type="match status" value="1"/>
</dbReference>
<dbReference type="PRINTS" id="PR01407">
    <property type="entry name" value="BUTYPHLNCDUF"/>
</dbReference>
<dbReference type="SMART" id="SM00502">
    <property type="entry name" value="BBC"/>
    <property type="match status" value="1"/>
</dbReference>
<dbReference type="SMART" id="SM00336">
    <property type="entry name" value="BBOX"/>
    <property type="match status" value="2"/>
</dbReference>
<dbReference type="SMART" id="SM00060">
    <property type="entry name" value="FN3"/>
    <property type="match status" value="1"/>
</dbReference>
<dbReference type="SMART" id="SM00184">
    <property type="entry name" value="RING"/>
    <property type="match status" value="1"/>
</dbReference>
<dbReference type="SMART" id="SM00449">
    <property type="entry name" value="SPRY"/>
    <property type="match status" value="1"/>
</dbReference>
<dbReference type="SUPFAM" id="SSF57845">
    <property type="entry name" value="B-box zinc-binding domain"/>
    <property type="match status" value="1"/>
</dbReference>
<dbReference type="SUPFAM" id="SSF49899">
    <property type="entry name" value="Concanavalin A-like lectins/glucanases"/>
    <property type="match status" value="1"/>
</dbReference>
<dbReference type="SUPFAM" id="SSF49265">
    <property type="entry name" value="Fibronectin type III"/>
    <property type="match status" value="1"/>
</dbReference>
<dbReference type="SUPFAM" id="SSF57850">
    <property type="entry name" value="RING/U-box"/>
    <property type="match status" value="1"/>
</dbReference>
<dbReference type="PROSITE" id="PS50188">
    <property type="entry name" value="B302_SPRY"/>
    <property type="match status" value="1"/>
</dbReference>
<dbReference type="PROSITE" id="PS51262">
    <property type="entry name" value="COS"/>
    <property type="match status" value="1"/>
</dbReference>
<dbReference type="PROSITE" id="PS50853">
    <property type="entry name" value="FN3"/>
    <property type="match status" value="1"/>
</dbReference>
<dbReference type="PROSITE" id="PS50119">
    <property type="entry name" value="ZF_BBOX"/>
    <property type="match status" value="1"/>
</dbReference>
<dbReference type="PROSITE" id="PS00518">
    <property type="entry name" value="ZF_RING_1"/>
    <property type="match status" value="1"/>
</dbReference>
<dbReference type="PROSITE" id="PS50089">
    <property type="entry name" value="ZF_RING_2"/>
    <property type="match status" value="1"/>
</dbReference>
<comment type="function">
    <text evidence="2">Has E3 ubiquitin ligase activity towards IGBP1, promoting its monoubiquitination, which results in deprotection of the catalytic subunit of protein phosphatase PP2A, and its subsequent degradation by polyubiquitination.</text>
</comment>
<comment type="catalytic activity">
    <reaction>
        <text>S-ubiquitinyl-[E2 ubiquitin-conjugating enzyme]-L-cysteine + [acceptor protein]-L-lysine = [E2 ubiquitin-conjugating enzyme]-L-cysteine + N(6)-ubiquitinyl-[acceptor protein]-L-lysine.</text>
        <dbReference type="EC" id="2.3.2.27"/>
    </reaction>
</comment>
<comment type="subunit">
    <text evidence="2">Homodimer or heterodimer with MID2. Interacts with IGBP1.</text>
</comment>
<comment type="subcellular location">
    <subcellularLocation>
        <location evidence="2">Cytoplasm</location>
    </subcellularLocation>
    <subcellularLocation>
        <location evidence="2">Cytoplasm</location>
        <location evidence="2">Cytoskeleton</location>
    </subcellularLocation>
    <text evidence="2">Microtubule-associated.</text>
</comment>
<comment type="similarity">
    <text evidence="10">Belongs to the TRIM/RBCC family.</text>
</comment>
<proteinExistence type="evidence at transcript level"/>
<gene>
    <name type="primary">Mid1</name>
    <name type="synonym">Fxy</name>
    <name type="synonym">Trim18</name>
</gene>
<keyword id="KW-0175">Coiled coil</keyword>
<keyword id="KW-0963">Cytoplasm</keyword>
<keyword id="KW-0206">Cytoskeleton</keyword>
<keyword id="KW-0479">Metal-binding</keyword>
<keyword id="KW-0493">Microtubule</keyword>
<keyword id="KW-0597">Phosphoprotein</keyword>
<keyword id="KW-0677">Repeat</keyword>
<keyword id="KW-0808">Transferase</keyword>
<keyword id="KW-0833">Ubl conjugation pathway</keyword>
<keyword id="KW-0862">Zinc</keyword>
<keyword id="KW-0863">Zinc-finger</keyword>
<evidence type="ECO:0000250" key="1"/>
<evidence type="ECO:0000250" key="2">
    <source>
        <dbReference type="UniProtKB" id="O15344"/>
    </source>
</evidence>
<evidence type="ECO:0000255" key="3"/>
<evidence type="ECO:0000255" key="4">
    <source>
        <dbReference type="PROSITE-ProRule" id="PRU00024"/>
    </source>
</evidence>
<evidence type="ECO:0000255" key="5">
    <source>
        <dbReference type="PROSITE-ProRule" id="PRU00175"/>
    </source>
</evidence>
<evidence type="ECO:0000255" key="6">
    <source>
        <dbReference type="PROSITE-ProRule" id="PRU00316"/>
    </source>
</evidence>
<evidence type="ECO:0000255" key="7">
    <source>
        <dbReference type="PROSITE-ProRule" id="PRU00548"/>
    </source>
</evidence>
<evidence type="ECO:0000255" key="8">
    <source>
        <dbReference type="PROSITE-ProRule" id="PRU00586"/>
    </source>
</evidence>
<evidence type="ECO:0000256" key="9">
    <source>
        <dbReference type="SAM" id="MobiDB-lite"/>
    </source>
</evidence>
<evidence type="ECO:0000305" key="10"/>
<name>TRI18_MUSSP</name>
<sequence>METLESELTCPICLELLEDPLLLPCAHSLCFNCAHRILVSHCATNEPVESINAFQCPTCRHVITLSQRGLDGLKRNVTLQNIIDRFQKASVSGPNSPSETRRERAFDANTMSSAEKVLCQFCDQDPAQDAVKTCVTCEVSYCDECLKATHPNKKPFTGHRLIEPIPDSHIRGLMCLEHEDEKVNMYCVTDDQLICALCKLVGRHRDHQVAALSERYDKLKQNLESNLTNLIKRNTELETLLAKLIQTCQHVEVNASRQEAKLTEECDLLIEIIQQRRQIIGTKIKEGKVIRLRKLAQQIANCKQCIERSASLISQAEHSLKENDHARFLQTAKNITERVSMATASSQVLIPEINLNDTFDTFALDFSREKKLLECLDYLTAPNPPTIREELCTASYDTITVHWTSDDEFSVVSYELQYTIFTGQANVVSLCNSADSWMIVPNIKQNHYTVHGLQSGTKYIFMVKAINQAGSRSSEPGKLKTNSQPFKLDPKSAHRKLKVSHDNLTVERDESSSKKSHTPERFTSQGSYGVAGNVFIDSGRHYWEVVISGSTWYAIGLAYKSAPKHEWIGKNSASWALCRCNNNWVVRHNSKEIPIEPAPHLRRVGILLDYDNGSIAFYDALNSIHLYTFDVALAQPVCPTFTVWNKCLTIITGLPIPDHLDCTEQLP</sequence>
<accession>P82457</accession>
<reference key="1">
    <citation type="journal article" date="1999" name="Curr. Biol.">
        <title>Evolutionary rate of a gene affected by chromosomal position.</title>
        <authorList>
            <person name="Perry J."/>
            <person name="Ashworth A."/>
        </authorList>
    </citation>
    <scope>NUCLEOTIDE SEQUENCE [MRNA]</scope>
</reference>
<protein>
    <recommendedName>
        <fullName>E3 ubiquitin-protein ligase Midline-1</fullName>
        <ecNumber>2.3.2.27</ecNumber>
    </recommendedName>
    <alternativeName>
        <fullName>RING finger protein Midline-1</fullName>
    </alternativeName>
    <alternativeName>
        <fullName evidence="10">RING-type E3 ubiquitin transferase Midline-1</fullName>
    </alternativeName>
    <alternativeName>
        <fullName>Tripartite motif-containing protein 18</fullName>
    </alternativeName>
</protein>